<comment type="function">
    <text evidence="1 2">Functions both as a transcriptional activator and a repressor of multiple genes encoding virulence factors as well as genes involved in environmental adaptation. Represses genes involved in iron homeostasis (PubMed:24670089, PubMed:29386661). Modulates intracellular levels of c-di-GMP which in turn regulates swimming motility and biofilm formation (PubMed:29386661).</text>
</comment>
<comment type="disruption phenotype">
    <text evidence="2">Deletion shows increased swimming motility, decreased biofilm formation and very limited ability for competitive colonization of rhizosphere.</text>
</comment>
<keyword id="KW-0010">Activator</keyword>
<keyword id="KW-0238">DNA-binding</keyword>
<keyword id="KW-0678">Repressor</keyword>
<keyword id="KW-0804">Transcription</keyword>
<keyword id="KW-0805">Transcription regulation</keyword>
<feature type="chain" id="PRO_0000448533" description="Transcription factor AmrZ">
    <location>
        <begin position="1"/>
        <end position="108"/>
    </location>
</feature>
<sequence length="108" mass="12387">MRPLKQAIYSSRTADKFVVRLPDGMRERIAEVARNHHRSMNSEIIARLEQSLIQEGALGEELSMRLDSPELSLHERELLQRFRQLSHRQQNALVSLIAHDAEMAADAT</sequence>
<evidence type="ECO:0000269" key="1">
    <source>
    </source>
</evidence>
<evidence type="ECO:0000269" key="2">
    <source>
    </source>
</evidence>
<evidence type="ECO:0000303" key="3">
    <source>
    </source>
</evidence>
<organism>
    <name type="scientific">Pseudomonas ogarae (strain DSM 112162 / CECT 30235 / F113)</name>
    <dbReference type="NCBI Taxonomy" id="1114970"/>
    <lineage>
        <taxon>Bacteria</taxon>
        <taxon>Pseudomonadati</taxon>
        <taxon>Pseudomonadota</taxon>
        <taxon>Gammaproteobacteria</taxon>
        <taxon>Pseudomonadales</taxon>
        <taxon>Pseudomonadaceae</taxon>
        <taxon>Pseudomonas</taxon>
    </lineage>
</organism>
<reference key="1">
    <citation type="journal article" date="2012" name="J. Bacteriol.">
        <title>Genome Sequence of the Biocontrol Strain Pseudomonas fluorescens F113.</title>
        <authorList>
            <person name="Redondo-Nieto M."/>
            <person name="Barret M."/>
            <person name="Morrisey J.P."/>
            <person name="Germaine K."/>
            <person name="Martinez-Granero F."/>
            <person name="Barahona E."/>
            <person name="Navazo A."/>
            <person name="Sanchez-Contreras M."/>
            <person name="Moynihan J.A."/>
            <person name="Giddens S.R."/>
            <person name="Coppoolse E.R."/>
            <person name="Muriel C."/>
            <person name="Stiekema W.J."/>
            <person name="Rainey P.B."/>
            <person name="Dowling D."/>
            <person name="O'Gara F."/>
            <person name="Martin M."/>
            <person name="Rivilla R."/>
        </authorList>
    </citation>
    <scope>NUCLEOTIDE SEQUENCE [LARGE SCALE GENOMIC DNA]</scope>
    <source>
        <strain>DSM 112162 / CECT 30235 / F113</strain>
    </source>
</reference>
<reference key="2">
    <citation type="journal article" date="2014" name="BMC Genomics">
        <title>AmrZ is a global transcriptional regulator implicated in iron uptake and environmental adaption in P. fluorescens F113.</title>
        <authorList>
            <person name="Martinez-Granero F."/>
            <person name="Redondo-Nieto M."/>
            <person name="Vesga P."/>
            <person name="Martin M."/>
            <person name="Rivilla R."/>
        </authorList>
    </citation>
    <scope>FUNCTION</scope>
</reference>
<reference key="3">
    <citation type="journal article" date="2018" name="Sci. Rep.">
        <title>AmrZ is a major determinant of c-di-GMP levels in Pseudomonas fluorescens F113.</title>
        <authorList>
            <person name="Muriel C."/>
            <person name="Arrebola E."/>
            <person name="Redondo-Nieto M."/>
            <person name="Martinez-Granero F."/>
            <person name="Jalvo B."/>
            <person name="Pfeilmeier S."/>
            <person name="Blanco-Romero E."/>
            <person name="Baena I."/>
            <person name="Malone J.G."/>
            <person name="Rivilla R."/>
            <person name="Martin M."/>
        </authorList>
    </citation>
    <scope>FUNCTION</scope>
    <scope>DISRUPTION PHENOTYPE</scope>
</reference>
<gene>
    <name evidence="3" type="primary">amrZ</name>
    <name type="ORF">PSF113_4470</name>
</gene>
<proteinExistence type="predicted"/>
<dbReference type="EMBL" id="CP003150">
    <property type="protein sequence ID" value="AEV64463.1"/>
    <property type="molecule type" value="Genomic_DNA"/>
</dbReference>
<dbReference type="RefSeq" id="WP_003204761.1">
    <property type="nucleotide sequence ID" value="NZ_MWTQ01000028.1"/>
</dbReference>
<dbReference type="SMR" id="G8Q5R9"/>
<dbReference type="KEGG" id="pfe:PSF113_4470"/>
<dbReference type="PATRIC" id="fig|1114970.3.peg.4557"/>
<dbReference type="eggNOG" id="ENOG5033BNF">
    <property type="taxonomic scope" value="Bacteria"/>
</dbReference>
<dbReference type="HOGENOM" id="CLU_148670_1_0_6"/>
<dbReference type="GO" id="GO:0003677">
    <property type="term" value="F:DNA binding"/>
    <property type="evidence" value="ECO:0007669"/>
    <property type="project" value="UniProtKB-KW"/>
</dbReference>
<dbReference type="GO" id="GO:0045892">
    <property type="term" value="P:negative regulation of DNA-templated transcription"/>
    <property type="evidence" value="ECO:0000315"/>
    <property type="project" value="CACAO"/>
</dbReference>
<dbReference type="FunFam" id="1.10.1220.10:FF:000003">
    <property type="entry name" value="Arc family DNA-binding protein"/>
    <property type="match status" value="1"/>
</dbReference>
<dbReference type="Gene3D" id="1.10.1220.10">
    <property type="entry name" value="Met repressor-like"/>
    <property type="match status" value="1"/>
</dbReference>
<dbReference type="InterPro" id="IPR005569">
    <property type="entry name" value="Arc_DNA-bd_dom"/>
</dbReference>
<dbReference type="InterPro" id="IPR013321">
    <property type="entry name" value="Arc_rbn_hlx_hlx"/>
</dbReference>
<dbReference type="InterPro" id="IPR010985">
    <property type="entry name" value="Ribbon_hlx_hlx"/>
</dbReference>
<dbReference type="Pfam" id="PF03869">
    <property type="entry name" value="Arc"/>
    <property type="match status" value="1"/>
</dbReference>
<dbReference type="SUPFAM" id="SSF47598">
    <property type="entry name" value="Ribbon-helix-helix"/>
    <property type="match status" value="1"/>
</dbReference>
<name>AMRZ_PSEO1</name>
<protein>
    <recommendedName>
        <fullName evidence="3">Transcription factor AmrZ</fullName>
    </recommendedName>
</protein>
<accession>G8Q5R9</accession>